<organism>
    <name type="scientific">Saccharomyces cerevisiae (strain ATCC 204508 / S288c)</name>
    <name type="common">Baker's yeast</name>
    <dbReference type="NCBI Taxonomy" id="559292"/>
    <lineage>
        <taxon>Eukaryota</taxon>
        <taxon>Fungi</taxon>
        <taxon>Dikarya</taxon>
        <taxon>Ascomycota</taxon>
        <taxon>Saccharomycotina</taxon>
        <taxon>Saccharomycetes</taxon>
        <taxon>Saccharomycetales</taxon>
        <taxon>Saccharomycetaceae</taxon>
        <taxon>Saccharomyces</taxon>
    </lineage>
</organism>
<keyword id="KW-0963">Cytoplasm</keyword>
<keyword id="KW-1017">Isopeptide bond</keyword>
<keyword id="KW-0479">Metal-binding</keyword>
<keyword id="KW-0597">Phosphoprotein</keyword>
<keyword id="KW-1185">Reference proteome</keyword>
<keyword id="KW-0808">Transferase</keyword>
<keyword id="KW-0832">Ubl conjugation</keyword>
<keyword id="KW-0833">Ubl conjugation pathway</keyword>
<keyword id="KW-0862">Zinc</keyword>
<keyword id="KW-0863">Zinc-finger</keyword>
<accession>Q07963</accession>
<accession>D6VY26</accession>
<sequence>MEDSDLSITNIRDFLTELPKLAKCEYSETTSYLLWKTLNLRLKHSDNDINWRSLVSILNSEAWENEKYRDILNGRKWRTLEFENDHHSVGNMHIGTACTRLCFPSETIYYCFTCSTNPLYEICELCFDKEKHVNHSYVAKVVMRPEGRICHCGDPFAFNDPSDAFKCKNELNNIPISNDNSNVTDDENVISLLNYVLDFLIDVTVSYKEEAEAHSSERKASSLMHPNQNSITDDIMEKHECEPLVNDENFVFFDNNWSNTRKEAHMEWAIQIEEEECNVHYMDLASTITRILNTPVEYAISITKALEDSHDVVTVLQSENFFEIDQIAKEFQKENIVVHVRKADDIFKRKLTDDLTDWLYSLCFKAATSLQNKYALRISMLDVWYSHFSKMRVSPTNTNPDFSKINLLGGFLISNEDSDESWFKPWSLENIEDERISKILTNYNERLIRAHSPNTVSHFYNFYGSRFQYIIINSINILSKKSKFKMLKIMASLFSLRDESRKFLAAQYIDVYLSVLYDAVASDAKECQVTLMSILGQYTFQDPSIANMTISSGFIERTIRFAFTLMAFNPEDLMSYLPISLYNGFKLPTETIRNRRTIICFKDLCTIMSANTVPEELLSNEAIFNAIIESFSEFSNVLPLKRETKEHVEVENFDFSAFYFFFSSILIMTDGYTRSISLVKDAAFRKQIVLKLLDVAQTREFESLTNSRKAISPDNASTNENDSNKATLSTVRETICNYVAETINFQVGVNTQYFFNPMSYLFKFVIQWSQCGRYEPIPASLTNYINLFEVFQDKQKALYISESALSTLVLIGQINVGFWVRNGTPITHQARMYTKYSMREFTYISDIFNVQFSMAMCNPDELMVTYLSRWGLKHWANGVPMYDYPDTETTVAVVNECILLLIQLLTEVRSLVMKSSKEGFERTFKSEIIHALCFDTCSYAQIVNCIPEHITKHPSFDIYLEKYANYTSPVSLTDNGIFVLKEKYKDEIDPYYIGLSSSRRYDVEKNIRLNMANLKKMKYEDTFVPAKKVKDLLKNTLFSGLYSISSVNTFGLFLKNTLDHIIKYDYDNLLPRVVHLIHLCVVNNLNEFMGILWHEYAIVDTEFCHYHSIGSILYYCLLKDNFSESHGKIREIFRYLMETAPHVNVNSYLREQTTSYTPGILWPTKEDKSHKDKEFERKKHLARLRKKKLMKKLAQQQMKFMENNSVDTSDISTPRTTSPSLSPTRINAENSSNTINSCCDDDCVFCKMPKDDDVFVYFSYQERNICDHGIDFTNPTDVNRINSLFSGKQTKDSAIQENPQDDDGTRLKFTSCEPVLRACGHGSHTKCLSGHMKSIRGIQNQTTKNIPLSYGSGLIYCPVCNSLSNSFLPKTNDIDKRTSSQFFMCIEKRSEAEENLDPMSSICIKAAMILGDLQGKKVTTIEDAYKVVNSVFINTISNTELRLRSHKKEGKIVNMERISSQCILTLHLVCELKSFIYKKFVNSKTFSSEISRKIWNWNEFLIKGNNVNLLLYMSQNFDNIDGGKTPQPPNLCIYEMFKRRFHQLLLLLARDMMRVNFYKDCRNKIKISSNGSEEPSTSFSYLFNTFKKYVDLFKPDDVRFDFTSLEKIKDFICSLLLESLSIFCRRTFLLFNIQYDDDGDGDNNNNRSNNFMDVKQREIELIFRYFKLPNLTHFLKDFFYNELTQNIERYNDGNDNLRIQQVIYDMVQNINTRAYPSPEHIQLIELPLNLSKFSLDNDEISNKCDKYEIAVCLLCGQKCHIQKSIALQGYLQGECTDHMRNGCEITSAYGVFLMTGTNAIYLSYGKRGTFYAAPYLSKYGETNEDYKFGTPVYLNRARYANLANEIVFGNMIPHIVFRLTDGSADLGGWETM</sequence>
<comment type="function">
    <text evidence="7 8">E3 ubiquitin-protein ligase which probably functions outside the N-end rule pathway, since it lacks the residues essential for the degradation of N-end rule substrates. Mediates RPN4 ubiquitination and subsequent degradation.</text>
</comment>
<comment type="catalytic activity">
    <reaction>
        <text>S-ubiquitinyl-[E2 ubiquitin-conjugating enzyme]-L-cysteine + [acceptor protein]-L-lysine = [E2 ubiquitin-conjugating enzyme]-L-cysteine + N(6)-ubiquitinyl-[acceptor protein]-L-lysine.</text>
        <dbReference type="EC" id="2.3.2.27"/>
    </reaction>
</comment>
<comment type="pathway">
    <text>Protein modification; protein ubiquitination.</text>
</comment>
<comment type="subunit">
    <text evidence="3 7 8">Interacts with MUB1, RPN4 and UBC2.</text>
</comment>
<comment type="interaction">
    <interactant intactId="EBI-34338">
        <id>Q07963</id>
    </interactant>
    <interactant intactId="EBI-28207">
        <id>Q03162</id>
        <label>MUB1</label>
    </interactant>
    <organismsDiffer>false</organismsDiffer>
    <experiments>2</experiments>
</comment>
<comment type="interaction">
    <interactant intactId="EBI-34338">
        <id>Q07963</id>
    </interactant>
    <interactant intactId="EBI-19722">
        <id>P06104</id>
        <label>RAD6</label>
    </interactant>
    <organismsDiffer>false</organismsDiffer>
    <experiments>7</experiments>
</comment>
<comment type="interaction">
    <interactant intactId="EBI-34338">
        <id>Q07963</id>
    </interactant>
    <interactant intactId="EBI-15931">
        <id>Q03465</id>
        <label>RPN4</label>
    </interactant>
    <organismsDiffer>false</organismsDiffer>
    <experiments>2</experiments>
</comment>
<comment type="subcellular location">
    <subcellularLocation>
        <location evidence="5">Cytoplasm</location>
    </subcellularLocation>
</comment>
<comment type="domain">
    <text>The RING-H2 zinc finger is an atypical RING finger with a His ligand in place of the fourth Cys of the classical motif.</text>
</comment>
<comment type="miscellaneous">
    <text evidence="6">Present with 49 molecules/cell in log phase SD medium.</text>
</comment>
<comment type="miscellaneous">
    <text>Deletion produces no detectable phenotype.</text>
</comment>
<comment type="similarity">
    <text evidence="9">Belongs to the E3 ubiquitin-protein ligase UBR1-like family.</text>
</comment>
<dbReference type="EC" id="2.3.2.27"/>
<dbReference type="EMBL" id="Z73196">
    <property type="protein sequence ID" value="CAA97547.1"/>
    <property type="molecule type" value="Genomic_DNA"/>
</dbReference>
<dbReference type="EMBL" id="BK006945">
    <property type="protein sequence ID" value="DAA09342.1"/>
    <property type="molecule type" value="Genomic_DNA"/>
</dbReference>
<dbReference type="PIR" id="S64851">
    <property type="entry name" value="S64851"/>
</dbReference>
<dbReference type="RefSeq" id="NP_013124.1">
    <property type="nucleotide sequence ID" value="NM_001181911.2"/>
</dbReference>
<dbReference type="SMR" id="Q07963"/>
<dbReference type="BioGRID" id="31298">
    <property type="interactions" value="469"/>
</dbReference>
<dbReference type="ComplexPortal" id="CPX-2935">
    <property type="entry name" value="RAD6-UBR2 ubiquitin ligase complex"/>
</dbReference>
<dbReference type="ComplexPortal" id="CPX-2937">
    <property type="entry name" value="MUB1-RAD6-UBR2 ubiquitin ligase complex"/>
</dbReference>
<dbReference type="DIP" id="DIP-6593N"/>
<dbReference type="FunCoup" id="Q07963">
    <property type="interactions" value="104"/>
</dbReference>
<dbReference type="IntAct" id="Q07963">
    <property type="interactions" value="26"/>
</dbReference>
<dbReference type="MINT" id="Q07963"/>
<dbReference type="STRING" id="4932.YLR024C"/>
<dbReference type="iPTMnet" id="Q07963"/>
<dbReference type="PaxDb" id="4932-YLR024C"/>
<dbReference type="PeptideAtlas" id="Q07963"/>
<dbReference type="EnsemblFungi" id="YLR024C_mRNA">
    <property type="protein sequence ID" value="YLR024C"/>
    <property type="gene ID" value="YLR024C"/>
</dbReference>
<dbReference type="GeneID" id="850711"/>
<dbReference type="KEGG" id="sce:YLR024C"/>
<dbReference type="AGR" id="SGD:S000004014"/>
<dbReference type="SGD" id="S000004014">
    <property type="gene designation" value="UBR2"/>
</dbReference>
<dbReference type="VEuPathDB" id="FungiDB:YLR024C"/>
<dbReference type="eggNOG" id="KOG1140">
    <property type="taxonomic scope" value="Eukaryota"/>
</dbReference>
<dbReference type="GeneTree" id="ENSGT00950000183075"/>
<dbReference type="HOGENOM" id="CLU_004097_0_0_1"/>
<dbReference type="InParanoid" id="Q07963"/>
<dbReference type="OMA" id="TKYSMRE"/>
<dbReference type="OrthoDB" id="26387at2759"/>
<dbReference type="BioCyc" id="YEAST:G3O-32185-MONOMER"/>
<dbReference type="Reactome" id="R-SCE-983168">
    <property type="pathway name" value="Antigen processing: Ubiquitination &amp; Proteasome degradation"/>
</dbReference>
<dbReference type="UniPathway" id="UPA00143"/>
<dbReference type="BioGRID-ORCS" id="850711">
    <property type="hits" value="0 hits in 10 CRISPR screens"/>
</dbReference>
<dbReference type="PRO" id="PR:Q07963"/>
<dbReference type="Proteomes" id="UP000002311">
    <property type="component" value="Chromosome XII"/>
</dbReference>
<dbReference type="RNAct" id="Q07963">
    <property type="molecule type" value="protein"/>
</dbReference>
<dbReference type="GO" id="GO:0005737">
    <property type="term" value="C:cytoplasm"/>
    <property type="evidence" value="ECO:0007005"/>
    <property type="project" value="SGD"/>
</dbReference>
<dbReference type="GO" id="GO:1990304">
    <property type="term" value="C:MUB1-RAD6-UBR2 ubiquitin ligase complex"/>
    <property type="evidence" value="ECO:0000353"/>
    <property type="project" value="ComplexPortal"/>
</dbReference>
<dbReference type="GO" id="GO:1990305">
    <property type="term" value="C:RAD6-UBR2 ubiquitin ligase complex"/>
    <property type="evidence" value="ECO:0000353"/>
    <property type="project" value="ComplexPortal"/>
</dbReference>
<dbReference type="GO" id="GO:0000151">
    <property type="term" value="C:ubiquitin ligase complex"/>
    <property type="evidence" value="ECO:0000318"/>
    <property type="project" value="GO_Central"/>
</dbReference>
<dbReference type="GO" id="GO:0061630">
    <property type="term" value="F:ubiquitin protein ligase activity"/>
    <property type="evidence" value="ECO:0000318"/>
    <property type="project" value="GO_Central"/>
</dbReference>
<dbReference type="GO" id="GO:0004842">
    <property type="term" value="F:ubiquitin-protein transferase activity"/>
    <property type="evidence" value="ECO:0000314"/>
    <property type="project" value="SGD"/>
</dbReference>
<dbReference type="GO" id="GO:0008270">
    <property type="term" value="F:zinc ion binding"/>
    <property type="evidence" value="ECO:0007669"/>
    <property type="project" value="UniProtKB-KW"/>
</dbReference>
<dbReference type="GO" id="GO:0034620">
    <property type="term" value="P:cellular response to unfolded protein"/>
    <property type="evidence" value="ECO:0000316"/>
    <property type="project" value="SGD"/>
</dbReference>
<dbReference type="GO" id="GO:0071629">
    <property type="term" value="P:cytoplasm protein quality control by the ubiquitin-proteasome system"/>
    <property type="evidence" value="ECO:0000316"/>
    <property type="project" value="SGD"/>
</dbReference>
<dbReference type="GO" id="GO:0000209">
    <property type="term" value="P:protein polyubiquitination"/>
    <property type="evidence" value="ECO:0000314"/>
    <property type="project" value="SGD"/>
</dbReference>
<dbReference type="GO" id="GO:0016567">
    <property type="term" value="P:protein ubiquitination"/>
    <property type="evidence" value="ECO:0000314"/>
    <property type="project" value="ComplexPortal"/>
</dbReference>
<dbReference type="GO" id="GO:0006511">
    <property type="term" value="P:ubiquitin-dependent protein catabolic process"/>
    <property type="evidence" value="ECO:0000314"/>
    <property type="project" value="SGD"/>
</dbReference>
<dbReference type="GO" id="GO:0071596">
    <property type="term" value="P:ubiquitin-dependent protein catabolic process via the N-end rule pathway"/>
    <property type="evidence" value="ECO:0000318"/>
    <property type="project" value="GO_Central"/>
</dbReference>
<dbReference type="CDD" id="cd19670">
    <property type="entry name" value="UBR-box_UBR1_2_3"/>
    <property type="match status" value="1"/>
</dbReference>
<dbReference type="FunFam" id="2.10.110.30:FF:000004">
    <property type="entry name" value="Ubr2p"/>
    <property type="match status" value="1"/>
</dbReference>
<dbReference type="Gene3D" id="2.10.110.30">
    <property type="match status" value="1"/>
</dbReference>
<dbReference type="InterPro" id="IPR044046">
    <property type="entry name" value="E3_ligase_UBR-like_C"/>
</dbReference>
<dbReference type="InterPro" id="IPR039164">
    <property type="entry name" value="UBR1-like"/>
</dbReference>
<dbReference type="InterPro" id="IPR055194">
    <property type="entry name" value="UBR1-like_winged-helix"/>
</dbReference>
<dbReference type="InterPro" id="IPR003126">
    <property type="entry name" value="Znf_UBR"/>
</dbReference>
<dbReference type="PANTHER" id="PTHR21497:SF24">
    <property type="entry name" value="E3 UBIQUITIN-PROTEIN LIGASE UBR1"/>
    <property type="match status" value="1"/>
</dbReference>
<dbReference type="PANTHER" id="PTHR21497">
    <property type="entry name" value="UBIQUITIN LIGASE E3 ALPHA-RELATED"/>
    <property type="match status" value="1"/>
</dbReference>
<dbReference type="Pfam" id="PF18995">
    <property type="entry name" value="PRT6_C"/>
    <property type="match status" value="1"/>
</dbReference>
<dbReference type="Pfam" id="PF22960">
    <property type="entry name" value="UBR1-like_wing"/>
    <property type="match status" value="1"/>
</dbReference>
<dbReference type="Pfam" id="PF02207">
    <property type="entry name" value="zf-UBR"/>
    <property type="match status" value="1"/>
</dbReference>
<dbReference type="SMART" id="SM00396">
    <property type="entry name" value="ZnF_UBR1"/>
    <property type="match status" value="1"/>
</dbReference>
<dbReference type="PROSITE" id="PS51157">
    <property type="entry name" value="ZF_UBR"/>
    <property type="match status" value="1"/>
</dbReference>
<evidence type="ECO:0000255" key="1">
    <source>
        <dbReference type="PROSITE-ProRule" id="PRU00508"/>
    </source>
</evidence>
<evidence type="ECO:0000256" key="2">
    <source>
        <dbReference type="SAM" id="MobiDB-lite"/>
    </source>
</evidence>
<evidence type="ECO:0000269" key="3">
    <source>
    </source>
</evidence>
<evidence type="ECO:0000269" key="4">
    <source>
    </source>
</evidence>
<evidence type="ECO:0000269" key="5">
    <source>
    </source>
</evidence>
<evidence type="ECO:0000269" key="6">
    <source>
    </source>
</evidence>
<evidence type="ECO:0000269" key="7">
    <source>
    </source>
</evidence>
<evidence type="ECO:0000269" key="8">
    <source>
    </source>
</evidence>
<evidence type="ECO:0000305" key="9"/>
<evidence type="ECO:0007744" key="10">
    <source>
    </source>
</evidence>
<evidence type="ECO:0007744" key="11">
    <source>
    </source>
</evidence>
<name>UBR2_YEAST</name>
<gene>
    <name type="primary">UBR2</name>
    <name type="ordered locus">YLR024C</name>
</gene>
<feature type="chain" id="PRO_0000056142" description="E3 ubiquitin-protein ligase UBR2">
    <location>
        <begin position="1"/>
        <end position="1872"/>
    </location>
</feature>
<feature type="zinc finger region" description="UBR-type" evidence="1">
    <location>
        <begin position="96"/>
        <end position="172"/>
    </location>
</feature>
<feature type="zinc finger region" description="RING-type; atypical">
    <location>
        <begin position="1241"/>
        <end position="1362"/>
    </location>
</feature>
<feature type="region of interest" description="Interaction with UBC2">
    <location>
        <begin position="1134"/>
        <end position="1240"/>
    </location>
</feature>
<feature type="region of interest" description="Disordered" evidence="2">
    <location>
        <begin position="1203"/>
        <end position="1227"/>
    </location>
</feature>
<feature type="compositionally biased region" description="Low complexity" evidence="2">
    <location>
        <begin position="1212"/>
        <end position="1225"/>
    </location>
</feature>
<feature type="modified residue" description="Phosphoserine" evidence="11">
    <location>
        <position position="1218"/>
    </location>
</feature>
<feature type="modified residue" description="Phosphoserine" evidence="10 11">
    <location>
        <position position="1222"/>
    </location>
</feature>
<feature type="cross-link" description="Glycyl lysine isopeptide (Lys-Gly) (interchain with G-Cter in ubiquitin)" evidence="4">
    <location>
        <position position="709"/>
    </location>
</feature>
<proteinExistence type="evidence at protein level"/>
<reference key="1">
    <citation type="journal article" date="1997" name="Nature">
        <title>The nucleotide sequence of Saccharomyces cerevisiae chromosome XII.</title>
        <authorList>
            <person name="Johnston M."/>
            <person name="Hillier L.W."/>
            <person name="Riles L."/>
            <person name="Albermann K."/>
            <person name="Andre B."/>
            <person name="Ansorge W."/>
            <person name="Benes V."/>
            <person name="Brueckner M."/>
            <person name="Delius H."/>
            <person name="Dubois E."/>
            <person name="Duesterhoeft A."/>
            <person name="Entian K.-D."/>
            <person name="Floeth M."/>
            <person name="Goffeau A."/>
            <person name="Hebling U."/>
            <person name="Heumann K."/>
            <person name="Heuss-Neitzel D."/>
            <person name="Hilbert H."/>
            <person name="Hilger F."/>
            <person name="Kleine K."/>
            <person name="Koetter P."/>
            <person name="Louis E.J."/>
            <person name="Messenguy F."/>
            <person name="Mewes H.-W."/>
            <person name="Miosga T."/>
            <person name="Moestl D."/>
            <person name="Mueller-Auer S."/>
            <person name="Nentwich U."/>
            <person name="Obermaier B."/>
            <person name="Piravandi E."/>
            <person name="Pohl T.M."/>
            <person name="Portetelle D."/>
            <person name="Purnelle B."/>
            <person name="Rechmann S."/>
            <person name="Rieger M."/>
            <person name="Rinke M."/>
            <person name="Rose M."/>
            <person name="Scharfe M."/>
            <person name="Scherens B."/>
            <person name="Scholler P."/>
            <person name="Schwager C."/>
            <person name="Schwarz S."/>
            <person name="Underwood A.P."/>
            <person name="Urrestarazu L.A."/>
            <person name="Vandenbol M."/>
            <person name="Verhasselt P."/>
            <person name="Vierendeels F."/>
            <person name="Voet M."/>
            <person name="Volckaert G."/>
            <person name="Voss H."/>
            <person name="Wambutt R."/>
            <person name="Wedler E."/>
            <person name="Wedler H."/>
            <person name="Zimmermann F.K."/>
            <person name="Zollner A."/>
            <person name="Hani J."/>
            <person name="Hoheisel J.D."/>
        </authorList>
    </citation>
    <scope>NUCLEOTIDE SEQUENCE [LARGE SCALE GENOMIC DNA]</scope>
    <source>
        <strain>ATCC 204508 / S288c</strain>
    </source>
</reference>
<reference key="2">
    <citation type="journal article" date="2014" name="G3 (Bethesda)">
        <title>The reference genome sequence of Saccharomyces cerevisiae: Then and now.</title>
        <authorList>
            <person name="Engel S.R."/>
            <person name="Dietrich F.S."/>
            <person name="Fisk D.G."/>
            <person name="Binkley G."/>
            <person name="Balakrishnan R."/>
            <person name="Costanzo M.C."/>
            <person name="Dwight S.S."/>
            <person name="Hitz B.C."/>
            <person name="Karra K."/>
            <person name="Nash R.S."/>
            <person name="Weng S."/>
            <person name="Wong E.D."/>
            <person name="Lloyd P."/>
            <person name="Skrzypek M.S."/>
            <person name="Miyasato S.R."/>
            <person name="Simison M."/>
            <person name="Cherry J.M."/>
        </authorList>
    </citation>
    <scope>GENOME REANNOTATION</scope>
    <source>
        <strain>ATCC 204508 / S288c</strain>
    </source>
</reference>
<reference key="3">
    <citation type="journal article" date="1999" name="EMBO J.">
        <title>The E2-E3 interaction in the N-end rule pathway: the RING-H2 finger of E3 is required for the synthesis of multiubiquitin chain.</title>
        <authorList>
            <person name="Xie Y."/>
            <person name="Varshavsky A."/>
        </authorList>
    </citation>
    <scope>INTERACTION WITH UBC2</scope>
</reference>
<reference key="4">
    <citation type="journal article" date="2003" name="Nature">
        <title>Global analysis of protein localization in budding yeast.</title>
        <authorList>
            <person name="Huh W.-K."/>
            <person name="Falvo J.V."/>
            <person name="Gerke L.C."/>
            <person name="Carroll A.S."/>
            <person name="Howson R.W."/>
            <person name="Weissman J.S."/>
            <person name="O'Shea E.K."/>
        </authorList>
    </citation>
    <scope>SUBCELLULAR LOCATION [LARGE SCALE ANALYSIS]</scope>
</reference>
<reference key="5">
    <citation type="journal article" date="2003" name="Nature">
        <title>Global analysis of protein expression in yeast.</title>
        <authorList>
            <person name="Ghaemmaghami S."/>
            <person name="Huh W.-K."/>
            <person name="Bower K."/>
            <person name="Howson R.W."/>
            <person name="Belle A."/>
            <person name="Dephoure N."/>
            <person name="O'Shea E.K."/>
            <person name="Weissman J.S."/>
        </authorList>
    </citation>
    <scope>LEVEL OF PROTEIN EXPRESSION [LARGE SCALE ANALYSIS]</scope>
</reference>
<reference key="6">
    <citation type="journal article" date="2003" name="Nat. Biotechnol.">
        <title>A proteomics approach to understanding protein ubiquitination.</title>
        <authorList>
            <person name="Peng J."/>
            <person name="Schwartz D."/>
            <person name="Elias J.E."/>
            <person name="Thoreen C.C."/>
            <person name="Cheng D."/>
            <person name="Marsischky G."/>
            <person name="Roelofs J."/>
            <person name="Finley D."/>
            <person name="Gygi S.P."/>
        </authorList>
    </citation>
    <scope>UBIQUITINATION [LARGE SCALE ANALYSIS] AT LYS-709</scope>
    <source>
        <strain>SUB592</strain>
    </source>
</reference>
<reference key="7">
    <citation type="journal article" date="2004" name="J. Biol. Chem.">
        <title>Rpn4 is a physiological substrate of the Ubr2 ubiquitin ligase.</title>
        <authorList>
            <person name="Wang L."/>
            <person name="Mao X."/>
            <person name="Ju D."/>
            <person name="Xie Y."/>
        </authorList>
    </citation>
    <scope>INTERACTION WITH UBC2 AND RPN4</scope>
    <scope>FUNCTION</scope>
</reference>
<reference key="8">
    <citation type="journal article" date="2007" name="J. Proteome Res.">
        <title>Large-scale phosphorylation analysis of alpha-factor-arrested Saccharomyces cerevisiae.</title>
        <authorList>
            <person name="Li X."/>
            <person name="Gerber S.A."/>
            <person name="Rudner A.D."/>
            <person name="Beausoleil S.A."/>
            <person name="Haas W."/>
            <person name="Villen J."/>
            <person name="Elias J.E."/>
            <person name="Gygi S.P."/>
        </authorList>
    </citation>
    <scope>PHOSPHORYLATION [LARGE SCALE ANALYSIS] AT SER-1222</scope>
    <scope>IDENTIFICATION BY MASS SPECTROMETRY [LARGE SCALE ANALYSIS]</scope>
    <source>
        <strain>ADR376</strain>
    </source>
</reference>
<reference key="9">
    <citation type="journal article" date="2008" name="Mol. Cell. Biol.">
        <title>Genome-wide analysis identifies MYND-domain protein Mub1 as an essential factor for Rpn4 ubiquitylation.</title>
        <authorList>
            <person name="Ju D."/>
            <person name="Wang X."/>
            <person name="Xu H."/>
            <person name="Xie Y."/>
        </authorList>
    </citation>
    <scope>FUNCTION</scope>
    <scope>INTERACTION WITH MUB1</scope>
</reference>
<reference key="10">
    <citation type="journal article" date="2008" name="Mol. Cell. Proteomics">
        <title>A multidimensional chromatography technology for in-depth phosphoproteome analysis.</title>
        <authorList>
            <person name="Albuquerque C.P."/>
            <person name="Smolka M.B."/>
            <person name="Payne S.H."/>
            <person name="Bafna V."/>
            <person name="Eng J."/>
            <person name="Zhou H."/>
        </authorList>
    </citation>
    <scope>IDENTIFICATION BY MASS SPECTROMETRY [LARGE SCALE ANALYSIS]</scope>
</reference>
<reference key="11">
    <citation type="journal article" date="2009" name="Science">
        <title>Global analysis of Cdk1 substrate phosphorylation sites provides insights into evolution.</title>
        <authorList>
            <person name="Holt L.J."/>
            <person name="Tuch B.B."/>
            <person name="Villen J."/>
            <person name="Johnson A.D."/>
            <person name="Gygi S.P."/>
            <person name="Morgan D.O."/>
        </authorList>
    </citation>
    <scope>PHOSPHORYLATION [LARGE SCALE ANALYSIS] AT SER-1218 AND SER-1222</scope>
    <scope>IDENTIFICATION BY MASS SPECTROMETRY [LARGE SCALE ANALYSIS]</scope>
</reference>
<reference key="12">
    <citation type="journal article" date="2012" name="Proc. Natl. Acad. Sci. U.S.A.">
        <title>N-terminal acetylome analyses and functional insights of the N-terminal acetyltransferase NatB.</title>
        <authorList>
            <person name="Van Damme P."/>
            <person name="Lasa M."/>
            <person name="Polevoda B."/>
            <person name="Gazquez C."/>
            <person name="Elosegui-Artola A."/>
            <person name="Kim D.S."/>
            <person name="De Juan-Pardo E."/>
            <person name="Demeyer K."/>
            <person name="Hole K."/>
            <person name="Larrea E."/>
            <person name="Timmerman E."/>
            <person name="Prieto J."/>
            <person name="Arnesen T."/>
            <person name="Sherman F."/>
            <person name="Gevaert K."/>
            <person name="Aldabe R."/>
        </authorList>
    </citation>
    <scope>IDENTIFICATION BY MASS SPECTROMETRY [LARGE SCALE ANALYSIS]</scope>
</reference>
<protein>
    <recommendedName>
        <fullName>E3 ubiquitin-protein ligase UBR2</fullName>
        <ecNumber>2.3.2.27</ecNumber>
    </recommendedName>
    <alternativeName>
        <fullName>RING-type E3 ubiquitin transferase UBR2</fullName>
    </alternativeName>
    <alternativeName>
        <fullName>Ubiquitin-protein ligase E3 component N-recognin-1 homolog</fullName>
    </alternativeName>
</protein>